<sequence>MARYTGPATRVSRRLRVDLVGGDMAFERRPYPPGQAGRNRIKESEYLLQLQEKQKAKYTYGVLERQFRRYYVEANRQPGKTGDNLVVLLETRLDNVVYRAGLARTRRQARQLVSHGHFTVNGKKTNVPSYRVSQYDIIDIRERSRKMEWFEEAQDRLGEAVVPAWLQVVPESLRILVHQLPERAQIDVPLQEQLIVELYSK</sequence>
<evidence type="ECO:0000255" key="1">
    <source>
        <dbReference type="HAMAP-Rule" id="MF_01306"/>
    </source>
</evidence>
<evidence type="ECO:0000305" key="2"/>
<proteinExistence type="inferred from homology"/>
<comment type="function">
    <text evidence="1">One of the primary rRNA binding proteins, it binds directly to 16S rRNA where it nucleates assembly of the body of the 30S subunit.</text>
</comment>
<comment type="function">
    <text evidence="1">With S5 and S12 plays an important role in translational accuracy.</text>
</comment>
<comment type="subunit">
    <text evidence="1">Part of the 30S ribosomal subunit. Contacts protein S5. The interaction surface between S4 and S5 is involved in control of translational fidelity.</text>
</comment>
<comment type="similarity">
    <text evidence="1">Belongs to the universal ribosomal protein uS4 family.</text>
</comment>
<name>RS4_CORAM</name>
<reference key="1">
    <citation type="submission" date="2005-08" db="EMBL/GenBank/DDBJ databases">
        <title>Molecular analysis of RNA polymerase alpha operon from Corynebacterium ammoniagenes.</title>
        <authorList>
            <person name="Ham S.H."/>
            <person name="Kim J.H."/>
            <person name="Lee B.R."/>
        </authorList>
    </citation>
    <scope>NUCLEOTIDE SEQUENCE [GENOMIC DNA]</scope>
    <source>
        <strain>ATCC 6872 / DSM 20305 / IAM 1645 / KCTC 1019 / NCTC 2399</strain>
    </source>
</reference>
<accession>Q3S664</accession>
<feature type="chain" id="PRO_0000228889" description="Small ribosomal subunit protein uS4">
    <location>
        <begin position="1"/>
        <end position="201"/>
    </location>
</feature>
<feature type="domain" description="S4 RNA-binding" evidence="1">
    <location>
        <begin position="91"/>
        <end position="154"/>
    </location>
</feature>
<gene>
    <name evidence="1" type="primary">rpsD</name>
</gene>
<keyword id="KW-0687">Ribonucleoprotein</keyword>
<keyword id="KW-0689">Ribosomal protein</keyword>
<keyword id="KW-0694">RNA-binding</keyword>
<keyword id="KW-0699">rRNA-binding</keyword>
<protein>
    <recommendedName>
        <fullName evidence="1">Small ribosomal subunit protein uS4</fullName>
    </recommendedName>
    <alternativeName>
        <fullName evidence="2">30S ribosomal protein S4</fullName>
    </alternativeName>
</protein>
<dbReference type="EMBL" id="DQ157860">
    <property type="protein sequence ID" value="AAZ91711.1"/>
    <property type="molecule type" value="Genomic_DNA"/>
</dbReference>
<dbReference type="SMR" id="Q3S664"/>
<dbReference type="GO" id="GO:0015935">
    <property type="term" value="C:small ribosomal subunit"/>
    <property type="evidence" value="ECO:0007669"/>
    <property type="project" value="InterPro"/>
</dbReference>
<dbReference type="GO" id="GO:0019843">
    <property type="term" value="F:rRNA binding"/>
    <property type="evidence" value="ECO:0007669"/>
    <property type="project" value="UniProtKB-UniRule"/>
</dbReference>
<dbReference type="GO" id="GO:0003735">
    <property type="term" value="F:structural constituent of ribosome"/>
    <property type="evidence" value="ECO:0007669"/>
    <property type="project" value="InterPro"/>
</dbReference>
<dbReference type="GO" id="GO:0042274">
    <property type="term" value="P:ribosomal small subunit biogenesis"/>
    <property type="evidence" value="ECO:0007669"/>
    <property type="project" value="TreeGrafter"/>
</dbReference>
<dbReference type="GO" id="GO:0006412">
    <property type="term" value="P:translation"/>
    <property type="evidence" value="ECO:0007669"/>
    <property type="project" value="UniProtKB-UniRule"/>
</dbReference>
<dbReference type="CDD" id="cd00165">
    <property type="entry name" value="S4"/>
    <property type="match status" value="1"/>
</dbReference>
<dbReference type="FunFam" id="3.10.290.10:FF:000001">
    <property type="entry name" value="30S ribosomal protein S4"/>
    <property type="match status" value="1"/>
</dbReference>
<dbReference type="Gene3D" id="1.10.1050.10">
    <property type="entry name" value="Ribosomal Protein S4 Delta 41, Chain A, domain 1"/>
    <property type="match status" value="1"/>
</dbReference>
<dbReference type="Gene3D" id="3.10.290.10">
    <property type="entry name" value="RNA-binding S4 domain"/>
    <property type="match status" value="1"/>
</dbReference>
<dbReference type="HAMAP" id="MF_01306_B">
    <property type="entry name" value="Ribosomal_uS4_B"/>
    <property type="match status" value="1"/>
</dbReference>
<dbReference type="InterPro" id="IPR022801">
    <property type="entry name" value="Ribosomal_uS4"/>
</dbReference>
<dbReference type="InterPro" id="IPR005709">
    <property type="entry name" value="Ribosomal_uS4_bac-type"/>
</dbReference>
<dbReference type="InterPro" id="IPR018079">
    <property type="entry name" value="Ribosomal_uS4_CS"/>
</dbReference>
<dbReference type="InterPro" id="IPR001912">
    <property type="entry name" value="Ribosomal_uS4_N"/>
</dbReference>
<dbReference type="InterPro" id="IPR002942">
    <property type="entry name" value="S4_RNA-bd"/>
</dbReference>
<dbReference type="InterPro" id="IPR036986">
    <property type="entry name" value="S4_RNA-bd_sf"/>
</dbReference>
<dbReference type="NCBIfam" id="NF003717">
    <property type="entry name" value="PRK05327.1"/>
    <property type="match status" value="1"/>
</dbReference>
<dbReference type="NCBIfam" id="TIGR01017">
    <property type="entry name" value="rpsD_bact"/>
    <property type="match status" value="1"/>
</dbReference>
<dbReference type="PANTHER" id="PTHR11831">
    <property type="entry name" value="30S 40S RIBOSOMAL PROTEIN"/>
    <property type="match status" value="1"/>
</dbReference>
<dbReference type="PANTHER" id="PTHR11831:SF4">
    <property type="entry name" value="SMALL RIBOSOMAL SUBUNIT PROTEIN US4M"/>
    <property type="match status" value="1"/>
</dbReference>
<dbReference type="Pfam" id="PF00163">
    <property type="entry name" value="Ribosomal_S4"/>
    <property type="match status" value="1"/>
</dbReference>
<dbReference type="Pfam" id="PF01479">
    <property type="entry name" value="S4"/>
    <property type="match status" value="1"/>
</dbReference>
<dbReference type="SMART" id="SM01390">
    <property type="entry name" value="Ribosomal_S4"/>
    <property type="match status" value="1"/>
</dbReference>
<dbReference type="SMART" id="SM00363">
    <property type="entry name" value="S4"/>
    <property type="match status" value="1"/>
</dbReference>
<dbReference type="SUPFAM" id="SSF55174">
    <property type="entry name" value="Alpha-L RNA-binding motif"/>
    <property type="match status" value="1"/>
</dbReference>
<dbReference type="PROSITE" id="PS00632">
    <property type="entry name" value="RIBOSOMAL_S4"/>
    <property type="match status" value="1"/>
</dbReference>
<dbReference type="PROSITE" id="PS50889">
    <property type="entry name" value="S4"/>
    <property type="match status" value="1"/>
</dbReference>
<organism>
    <name type="scientific">Corynebacterium ammoniagenes</name>
    <name type="common">Brevibacterium ammoniagenes</name>
    <dbReference type="NCBI Taxonomy" id="1697"/>
    <lineage>
        <taxon>Bacteria</taxon>
        <taxon>Bacillati</taxon>
        <taxon>Actinomycetota</taxon>
        <taxon>Actinomycetes</taxon>
        <taxon>Mycobacteriales</taxon>
        <taxon>Corynebacteriaceae</taxon>
        <taxon>Corynebacterium</taxon>
    </lineage>
</organism>